<name>MRAY_STAAS</name>
<sequence>MIFVYALLALVITFVLVPVLIPTLKRMKFGQSIREEGPQSHMKKTGTPTMGGLTFLLSIVITSLVVIIFVDQANPIILLLFVTIGFGLIGFIDDYIIVVKKNNQGLTSKQKFLAQIGIAIIFFVLSNVFHLVNFSTSIHIPFTNVAIPLSFAYVIFIVFWQVGFSNAVNLTDGLDGLATGLSIIGFTMYAIMSFVLGETAIGIFCIIMLFALLGFLPYNINPAKVFMGDTGSLALGGIFATISIMLNQELSLIFIGLVFVIETLSVMLQVASFKLTGKRIFKMSPIHHHFELIGWSEWKVVTVFWAVGLISGLIGLWIGVH</sequence>
<organism>
    <name type="scientific">Staphylococcus aureus (strain MSSA476)</name>
    <dbReference type="NCBI Taxonomy" id="282459"/>
    <lineage>
        <taxon>Bacteria</taxon>
        <taxon>Bacillati</taxon>
        <taxon>Bacillota</taxon>
        <taxon>Bacilli</taxon>
        <taxon>Bacillales</taxon>
        <taxon>Staphylococcaceae</taxon>
        <taxon>Staphylococcus</taxon>
    </lineage>
</organism>
<keyword id="KW-0131">Cell cycle</keyword>
<keyword id="KW-0132">Cell division</keyword>
<keyword id="KW-1003">Cell membrane</keyword>
<keyword id="KW-0133">Cell shape</keyword>
<keyword id="KW-0961">Cell wall biogenesis/degradation</keyword>
<keyword id="KW-0460">Magnesium</keyword>
<keyword id="KW-0472">Membrane</keyword>
<keyword id="KW-0479">Metal-binding</keyword>
<keyword id="KW-0573">Peptidoglycan synthesis</keyword>
<keyword id="KW-0808">Transferase</keyword>
<keyword id="KW-0812">Transmembrane</keyword>
<keyword id="KW-1133">Transmembrane helix</keyword>
<gene>
    <name evidence="1" type="primary">mraY</name>
    <name type="ordered locus">SAS1116</name>
</gene>
<dbReference type="EC" id="2.7.8.13" evidence="1"/>
<dbReference type="EMBL" id="BX571857">
    <property type="protein sequence ID" value="CAG42893.1"/>
    <property type="molecule type" value="Genomic_DNA"/>
</dbReference>
<dbReference type="RefSeq" id="WP_000578469.1">
    <property type="nucleotide sequence ID" value="NC_002953.3"/>
</dbReference>
<dbReference type="SMR" id="Q6GA30"/>
<dbReference type="KEGG" id="sas:SAS1116"/>
<dbReference type="HOGENOM" id="CLU_023982_0_1_9"/>
<dbReference type="UniPathway" id="UPA00219"/>
<dbReference type="GO" id="GO:0005886">
    <property type="term" value="C:plasma membrane"/>
    <property type="evidence" value="ECO:0007669"/>
    <property type="project" value="UniProtKB-SubCell"/>
</dbReference>
<dbReference type="GO" id="GO:0046872">
    <property type="term" value="F:metal ion binding"/>
    <property type="evidence" value="ECO:0007669"/>
    <property type="project" value="UniProtKB-KW"/>
</dbReference>
<dbReference type="GO" id="GO:0008963">
    <property type="term" value="F:phospho-N-acetylmuramoyl-pentapeptide-transferase activity"/>
    <property type="evidence" value="ECO:0007669"/>
    <property type="project" value="UniProtKB-UniRule"/>
</dbReference>
<dbReference type="GO" id="GO:0051301">
    <property type="term" value="P:cell division"/>
    <property type="evidence" value="ECO:0007669"/>
    <property type="project" value="UniProtKB-KW"/>
</dbReference>
<dbReference type="GO" id="GO:0071555">
    <property type="term" value="P:cell wall organization"/>
    <property type="evidence" value="ECO:0007669"/>
    <property type="project" value="UniProtKB-KW"/>
</dbReference>
<dbReference type="GO" id="GO:0009252">
    <property type="term" value="P:peptidoglycan biosynthetic process"/>
    <property type="evidence" value="ECO:0007669"/>
    <property type="project" value="UniProtKB-UniRule"/>
</dbReference>
<dbReference type="GO" id="GO:0008360">
    <property type="term" value="P:regulation of cell shape"/>
    <property type="evidence" value="ECO:0007669"/>
    <property type="project" value="UniProtKB-KW"/>
</dbReference>
<dbReference type="CDD" id="cd06852">
    <property type="entry name" value="GT_MraY"/>
    <property type="match status" value="1"/>
</dbReference>
<dbReference type="HAMAP" id="MF_00038">
    <property type="entry name" value="MraY"/>
    <property type="match status" value="1"/>
</dbReference>
<dbReference type="InterPro" id="IPR000715">
    <property type="entry name" value="Glycosyl_transferase_4"/>
</dbReference>
<dbReference type="InterPro" id="IPR003524">
    <property type="entry name" value="PNAcMuramoyl-5peptid_Trfase"/>
</dbReference>
<dbReference type="InterPro" id="IPR018480">
    <property type="entry name" value="PNAcMuramoyl-5peptid_Trfase_CS"/>
</dbReference>
<dbReference type="NCBIfam" id="TIGR00445">
    <property type="entry name" value="mraY"/>
    <property type="match status" value="1"/>
</dbReference>
<dbReference type="PANTHER" id="PTHR22926">
    <property type="entry name" value="PHOSPHO-N-ACETYLMURAMOYL-PENTAPEPTIDE-TRANSFERASE"/>
    <property type="match status" value="1"/>
</dbReference>
<dbReference type="PANTHER" id="PTHR22926:SF5">
    <property type="entry name" value="PHOSPHO-N-ACETYLMURAMOYL-PENTAPEPTIDE-TRANSFERASE HOMOLOG"/>
    <property type="match status" value="1"/>
</dbReference>
<dbReference type="Pfam" id="PF00953">
    <property type="entry name" value="Glycos_transf_4"/>
    <property type="match status" value="1"/>
</dbReference>
<dbReference type="PROSITE" id="PS01347">
    <property type="entry name" value="MRAY_1"/>
    <property type="match status" value="1"/>
</dbReference>
<dbReference type="PROSITE" id="PS01348">
    <property type="entry name" value="MRAY_2"/>
    <property type="match status" value="1"/>
</dbReference>
<feature type="chain" id="PRO_0000108894" description="Phospho-N-acetylmuramoyl-pentapeptide-transferase">
    <location>
        <begin position="1"/>
        <end position="321"/>
    </location>
</feature>
<feature type="transmembrane region" description="Helical" evidence="1">
    <location>
        <begin position="1"/>
        <end position="21"/>
    </location>
</feature>
<feature type="transmembrane region" description="Helical" evidence="1">
    <location>
        <begin position="50"/>
        <end position="70"/>
    </location>
</feature>
<feature type="transmembrane region" description="Helical" evidence="1">
    <location>
        <begin position="76"/>
        <end position="96"/>
    </location>
</feature>
<feature type="transmembrane region" description="Helical" evidence="1">
    <location>
        <begin position="112"/>
        <end position="132"/>
    </location>
</feature>
<feature type="transmembrane region" description="Helical" evidence="1">
    <location>
        <begin position="140"/>
        <end position="160"/>
    </location>
</feature>
<feature type="transmembrane region" description="Helical" evidence="1">
    <location>
        <begin position="176"/>
        <end position="196"/>
    </location>
</feature>
<feature type="transmembrane region" description="Helical" evidence="1">
    <location>
        <begin position="200"/>
        <end position="220"/>
    </location>
</feature>
<feature type="transmembrane region" description="Helical" evidence="1">
    <location>
        <begin position="225"/>
        <end position="245"/>
    </location>
</feature>
<feature type="transmembrane region" description="Helical" evidence="1">
    <location>
        <begin position="250"/>
        <end position="270"/>
    </location>
</feature>
<feature type="transmembrane region" description="Helical" evidence="1">
    <location>
        <begin position="300"/>
        <end position="320"/>
    </location>
</feature>
<evidence type="ECO:0000255" key="1">
    <source>
        <dbReference type="HAMAP-Rule" id="MF_00038"/>
    </source>
</evidence>
<evidence type="ECO:0000305" key="2"/>
<accession>Q6GA30</accession>
<comment type="function">
    <text evidence="1">Catalyzes the initial step of the lipid cycle reactions in the biosynthesis of the cell wall peptidoglycan: transfers peptidoglycan precursor phospho-MurNAc-pentapeptide from UDP-MurNAc-pentapeptide onto the lipid carrier undecaprenyl phosphate, yielding undecaprenyl-pyrophosphoryl-MurNAc-pentapeptide, known as lipid I.</text>
</comment>
<comment type="catalytic activity">
    <reaction evidence="1">
        <text>UDP-N-acetyl-alpha-D-muramoyl-L-alanyl-gamma-D-glutamyl-L-lysyl-D-alanyl-D-alanine + di-trans,octa-cis-undecaprenyl phosphate = Mur2Ac(oyl-L-Ala-gamma-D-Glu-L-Lys-D-Ala-D-Ala)-di-trans,octa-cis-undecaprenyl diphosphate + UMP</text>
        <dbReference type="Rhea" id="RHEA:21920"/>
        <dbReference type="ChEBI" id="CHEBI:57865"/>
        <dbReference type="ChEBI" id="CHEBI:60032"/>
        <dbReference type="ChEBI" id="CHEBI:60392"/>
        <dbReference type="ChEBI" id="CHEBI:70758"/>
        <dbReference type="EC" id="2.7.8.13"/>
    </reaction>
</comment>
<comment type="cofactor">
    <cofactor evidence="1">
        <name>Mg(2+)</name>
        <dbReference type="ChEBI" id="CHEBI:18420"/>
    </cofactor>
</comment>
<comment type="pathway">
    <text evidence="1">Cell wall biogenesis; peptidoglycan biosynthesis.</text>
</comment>
<comment type="subcellular location">
    <subcellularLocation>
        <location evidence="1">Cell membrane</location>
        <topology evidence="1">Multi-pass membrane protein</topology>
    </subcellularLocation>
</comment>
<comment type="similarity">
    <text evidence="1 2">Belongs to the glycosyltransferase 4 family. MraY subfamily.</text>
</comment>
<protein>
    <recommendedName>
        <fullName evidence="1">Phospho-N-acetylmuramoyl-pentapeptide-transferase</fullName>
        <ecNumber evidence="1">2.7.8.13</ecNumber>
    </recommendedName>
    <alternativeName>
        <fullName evidence="1">UDP-MurNAc-pentapeptide phosphotransferase</fullName>
    </alternativeName>
</protein>
<proteinExistence type="inferred from homology"/>
<reference key="1">
    <citation type="journal article" date="2004" name="Proc. Natl. Acad. Sci. U.S.A.">
        <title>Complete genomes of two clinical Staphylococcus aureus strains: evidence for the rapid evolution of virulence and drug resistance.</title>
        <authorList>
            <person name="Holden M.T.G."/>
            <person name="Feil E.J."/>
            <person name="Lindsay J.A."/>
            <person name="Peacock S.J."/>
            <person name="Day N.P.J."/>
            <person name="Enright M.C."/>
            <person name="Foster T.J."/>
            <person name="Moore C.E."/>
            <person name="Hurst L."/>
            <person name="Atkin R."/>
            <person name="Barron A."/>
            <person name="Bason N."/>
            <person name="Bentley S.D."/>
            <person name="Chillingworth C."/>
            <person name="Chillingworth T."/>
            <person name="Churcher C."/>
            <person name="Clark L."/>
            <person name="Corton C."/>
            <person name="Cronin A."/>
            <person name="Doggett J."/>
            <person name="Dowd L."/>
            <person name="Feltwell T."/>
            <person name="Hance Z."/>
            <person name="Harris B."/>
            <person name="Hauser H."/>
            <person name="Holroyd S."/>
            <person name="Jagels K."/>
            <person name="James K.D."/>
            <person name="Lennard N."/>
            <person name="Line A."/>
            <person name="Mayes R."/>
            <person name="Moule S."/>
            <person name="Mungall K."/>
            <person name="Ormond D."/>
            <person name="Quail M.A."/>
            <person name="Rabbinowitsch E."/>
            <person name="Rutherford K.M."/>
            <person name="Sanders M."/>
            <person name="Sharp S."/>
            <person name="Simmonds M."/>
            <person name="Stevens K."/>
            <person name="Whitehead S."/>
            <person name="Barrell B.G."/>
            <person name="Spratt B.G."/>
            <person name="Parkhill J."/>
        </authorList>
    </citation>
    <scope>NUCLEOTIDE SEQUENCE [LARGE SCALE GENOMIC DNA]</scope>
    <source>
        <strain>MSSA476</strain>
    </source>
</reference>